<feature type="chain" id="PRO_0000105495" description="DNA polymerase III subunit gamma">
    <location>
        <begin position="1"/>
        <end position="363"/>
    </location>
</feature>
<feature type="binding site" evidence="3">
    <location>
        <begin position="45"/>
        <end position="52"/>
    </location>
    <ligand>
        <name>ATP</name>
        <dbReference type="ChEBI" id="CHEBI:30616"/>
    </ligand>
</feature>
<feature type="binding site" evidence="2">
    <location>
        <position position="64"/>
    </location>
    <ligand>
        <name>Zn(2+)</name>
        <dbReference type="ChEBI" id="CHEBI:29105"/>
    </ligand>
</feature>
<feature type="binding site" evidence="2">
    <location>
        <position position="73"/>
    </location>
    <ligand>
        <name>Zn(2+)</name>
        <dbReference type="ChEBI" id="CHEBI:29105"/>
    </ligand>
</feature>
<feature type="binding site" evidence="2">
    <location>
        <position position="76"/>
    </location>
    <ligand>
        <name>Zn(2+)</name>
        <dbReference type="ChEBI" id="CHEBI:29105"/>
    </ligand>
</feature>
<feature type="binding site" evidence="2">
    <location>
        <position position="79"/>
    </location>
    <ligand>
        <name>Zn(2+)</name>
        <dbReference type="ChEBI" id="CHEBI:29105"/>
    </ligand>
</feature>
<comment type="function">
    <text>DNA polymerase III is a complex, multichain enzyme responsible for most of the replicative synthesis in bacteria. This DNA polymerase also exhibits 3' to 5' exonuclease activity.</text>
</comment>
<comment type="catalytic activity">
    <reaction>
        <text>DNA(n) + a 2'-deoxyribonucleoside 5'-triphosphate = DNA(n+1) + diphosphate</text>
        <dbReference type="Rhea" id="RHEA:22508"/>
        <dbReference type="Rhea" id="RHEA-COMP:17339"/>
        <dbReference type="Rhea" id="RHEA-COMP:17340"/>
        <dbReference type="ChEBI" id="CHEBI:33019"/>
        <dbReference type="ChEBI" id="CHEBI:61560"/>
        <dbReference type="ChEBI" id="CHEBI:173112"/>
        <dbReference type="EC" id="2.7.7.7"/>
    </reaction>
</comment>
<comment type="subunit">
    <text evidence="1">DNA polymerase III contains a core (composed of alpha, epsilon and theta chains) that associates with a tau subunit. This core dimerizes to form the POLIII' complex. PolIII' associates with the gamma complex (composed of gamma, delta, delta', psi and chi chains) and with the beta chain to form the complete DNA polymerase III complex (By similarity).</text>
</comment>
<comment type="similarity">
    <text evidence="4">Belongs to the DnaX/STICHEL family.</text>
</comment>
<dbReference type="EC" id="2.7.7.7"/>
<dbReference type="EMBL" id="AE013218">
    <property type="protein sequence ID" value="AAM68009.1"/>
    <property type="molecule type" value="Genomic_DNA"/>
</dbReference>
<dbReference type="RefSeq" id="WP_011053976.1">
    <property type="nucleotide sequence ID" value="NC_004061.1"/>
</dbReference>
<dbReference type="SMR" id="Q8K983"/>
<dbReference type="STRING" id="198804.BUsg_466"/>
<dbReference type="GeneID" id="93003937"/>
<dbReference type="KEGG" id="bas:BUsg_466"/>
<dbReference type="eggNOG" id="COG2812">
    <property type="taxonomic scope" value="Bacteria"/>
</dbReference>
<dbReference type="HOGENOM" id="CLU_006229_0_1_6"/>
<dbReference type="Proteomes" id="UP000000416">
    <property type="component" value="Chromosome"/>
</dbReference>
<dbReference type="GO" id="GO:0009360">
    <property type="term" value="C:DNA polymerase III complex"/>
    <property type="evidence" value="ECO:0007669"/>
    <property type="project" value="InterPro"/>
</dbReference>
<dbReference type="GO" id="GO:0005524">
    <property type="term" value="F:ATP binding"/>
    <property type="evidence" value="ECO:0007669"/>
    <property type="project" value="UniProtKB-KW"/>
</dbReference>
<dbReference type="GO" id="GO:0016887">
    <property type="term" value="F:ATP hydrolysis activity"/>
    <property type="evidence" value="ECO:0007669"/>
    <property type="project" value="InterPro"/>
</dbReference>
<dbReference type="GO" id="GO:0003677">
    <property type="term" value="F:DNA binding"/>
    <property type="evidence" value="ECO:0007669"/>
    <property type="project" value="InterPro"/>
</dbReference>
<dbReference type="GO" id="GO:0003887">
    <property type="term" value="F:DNA-directed DNA polymerase activity"/>
    <property type="evidence" value="ECO:0007669"/>
    <property type="project" value="UniProtKB-KW"/>
</dbReference>
<dbReference type="GO" id="GO:0046872">
    <property type="term" value="F:metal ion binding"/>
    <property type="evidence" value="ECO:0007669"/>
    <property type="project" value="UniProtKB-KW"/>
</dbReference>
<dbReference type="GO" id="GO:0006261">
    <property type="term" value="P:DNA-templated DNA replication"/>
    <property type="evidence" value="ECO:0007669"/>
    <property type="project" value="TreeGrafter"/>
</dbReference>
<dbReference type="CDD" id="cd00009">
    <property type="entry name" value="AAA"/>
    <property type="match status" value="1"/>
</dbReference>
<dbReference type="CDD" id="cd18137">
    <property type="entry name" value="HLD_clamp_pol_III_gamma_tau"/>
    <property type="match status" value="1"/>
</dbReference>
<dbReference type="FunFam" id="3.40.50.300:FF:000014">
    <property type="entry name" value="DNA polymerase III subunit gamma/tau"/>
    <property type="match status" value="1"/>
</dbReference>
<dbReference type="Gene3D" id="1.10.8.60">
    <property type="match status" value="1"/>
</dbReference>
<dbReference type="Gene3D" id="1.20.272.10">
    <property type="match status" value="1"/>
</dbReference>
<dbReference type="Gene3D" id="3.40.50.300">
    <property type="entry name" value="P-loop containing nucleotide triphosphate hydrolases"/>
    <property type="match status" value="1"/>
</dbReference>
<dbReference type="InterPro" id="IPR003593">
    <property type="entry name" value="AAA+_ATPase"/>
</dbReference>
<dbReference type="InterPro" id="IPR008921">
    <property type="entry name" value="DNA_pol3_clamp-load_cplx_C"/>
</dbReference>
<dbReference type="InterPro" id="IPR022754">
    <property type="entry name" value="DNA_pol_III_gamma-3"/>
</dbReference>
<dbReference type="InterPro" id="IPR012763">
    <property type="entry name" value="DNA_pol_III_sug/sutau_N"/>
</dbReference>
<dbReference type="InterPro" id="IPR050238">
    <property type="entry name" value="DNA_Rep/Repair_Clamp_Loader"/>
</dbReference>
<dbReference type="InterPro" id="IPR045085">
    <property type="entry name" value="HLD_clamp_pol_III_gamma_tau"/>
</dbReference>
<dbReference type="InterPro" id="IPR027417">
    <property type="entry name" value="P-loop_NTPase"/>
</dbReference>
<dbReference type="NCBIfam" id="TIGR02397">
    <property type="entry name" value="dnaX_nterm"/>
    <property type="match status" value="1"/>
</dbReference>
<dbReference type="NCBIfam" id="NF011522">
    <property type="entry name" value="PRK14961.1"/>
    <property type="match status" value="1"/>
</dbReference>
<dbReference type="PANTHER" id="PTHR11669:SF0">
    <property type="entry name" value="PROTEIN STICHEL-LIKE 2"/>
    <property type="match status" value="1"/>
</dbReference>
<dbReference type="PANTHER" id="PTHR11669">
    <property type="entry name" value="REPLICATION FACTOR C / DNA POLYMERASE III GAMMA-TAU SUBUNIT"/>
    <property type="match status" value="1"/>
</dbReference>
<dbReference type="Pfam" id="PF13177">
    <property type="entry name" value="DNA_pol3_delta2"/>
    <property type="match status" value="1"/>
</dbReference>
<dbReference type="Pfam" id="PF12169">
    <property type="entry name" value="DNA_pol3_gamma3"/>
    <property type="match status" value="1"/>
</dbReference>
<dbReference type="Pfam" id="PF22608">
    <property type="entry name" value="DNAX_ATPase_lid"/>
    <property type="match status" value="1"/>
</dbReference>
<dbReference type="SMART" id="SM00382">
    <property type="entry name" value="AAA"/>
    <property type="match status" value="1"/>
</dbReference>
<dbReference type="SUPFAM" id="SSF52540">
    <property type="entry name" value="P-loop containing nucleoside triphosphate hydrolases"/>
    <property type="match status" value="1"/>
</dbReference>
<dbReference type="SUPFAM" id="SSF48019">
    <property type="entry name" value="post-AAA+ oligomerization domain-like"/>
    <property type="match status" value="1"/>
</dbReference>
<evidence type="ECO:0000250" key="1"/>
<evidence type="ECO:0000250" key="2">
    <source>
        <dbReference type="UniProtKB" id="P06710"/>
    </source>
</evidence>
<evidence type="ECO:0000255" key="3"/>
<evidence type="ECO:0000305" key="4"/>
<accession>Q8K983</accession>
<organism>
    <name type="scientific">Buchnera aphidicola subsp. Schizaphis graminum (strain Sg)</name>
    <dbReference type="NCBI Taxonomy" id="198804"/>
    <lineage>
        <taxon>Bacteria</taxon>
        <taxon>Pseudomonadati</taxon>
        <taxon>Pseudomonadota</taxon>
        <taxon>Gammaproteobacteria</taxon>
        <taxon>Enterobacterales</taxon>
        <taxon>Erwiniaceae</taxon>
        <taxon>Buchnera</taxon>
    </lineage>
</organism>
<protein>
    <recommendedName>
        <fullName>DNA polymerase III subunit gamma</fullName>
        <ecNumber>2.7.7.7</ecNumber>
    </recommendedName>
</protein>
<sequence length="363" mass="42186">MNYQILARKWRPQSFKKIIGQKYIVKAISNGFSLGKIHHAWLLSGTRGVGKTTIARLIAKSLNCEIGITSLPCRKCTICQEIEKGICLDFIEIDAASRTKVEEIREILDNIYYTPSKSRFKVYLIDEVHMLSRHSFNALLKTLEEPPQHIKFILATTDVEKIPKTIRSRCLHFKLNILSEEDIFNFLKHILKKGGNNFDEEALKIISDYANGSMRDALNLLEHAMHLSKNNINLKNTTEMLGIPNKKHAFLLTKFLLEQDSKKMMCLLNKISKIGLEWQNILIEMMRFLHHIAMLKSYPKIWNQIFIKNNENEIKKIAENNSKYNIQLCYKILLKGRKELFFSPNHKMGVEMILLQAITEIKR</sequence>
<proteinExistence type="inferred from homology"/>
<name>DPO3X_BUCAP</name>
<reference key="1">
    <citation type="journal article" date="2002" name="Science">
        <title>50 million years of genomic stasis in endosymbiotic bacteria.</title>
        <authorList>
            <person name="Tamas I."/>
            <person name="Klasson L."/>
            <person name="Canbaeck B."/>
            <person name="Naeslund A.K."/>
            <person name="Eriksson A.-S."/>
            <person name="Wernegreen J.J."/>
            <person name="Sandstroem J.P."/>
            <person name="Moran N.A."/>
            <person name="Andersson S.G.E."/>
        </authorList>
    </citation>
    <scope>NUCLEOTIDE SEQUENCE [LARGE SCALE GENOMIC DNA]</scope>
    <source>
        <strain>Sg</strain>
    </source>
</reference>
<keyword id="KW-0067">ATP-binding</keyword>
<keyword id="KW-0235">DNA replication</keyword>
<keyword id="KW-0239">DNA-directed DNA polymerase</keyword>
<keyword id="KW-0479">Metal-binding</keyword>
<keyword id="KW-0547">Nucleotide-binding</keyword>
<keyword id="KW-0548">Nucleotidyltransferase</keyword>
<keyword id="KW-0808">Transferase</keyword>
<keyword id="KW-0862">Zinc</keyword>
<gene>
    <name type="primary">dnaX</name>
    <name type="ordered locus">BUsg_466</name>
</gene>